<keyword id="KW-0007">Acetylation</keyword>
<keyword id="KW-0903">Direct protein sequencing</keyword>
<keyword id="KW-0276">Fatty acid metabolism</keyword>
<keyword id="KW-0378">Hydrolase</keyword>
<keyword id="KW-0443">Lipid metabolism</keyword>
<keyword id="KW-0496">Mitochondrion</keyword>
<keyword id="KW-1185">Reference proteome</keyword>
<keyword id="KW-0719">Serine esterase</keyword>
<keyword id="KW-0809">Transit peptide</keyword>
<feature type="transit peptide" description="Mitochondrion" evidence="3">
    <location>
        <begin position="1"/>
        <end position="42"/>
    </location>
</feature>
<feature type="chain" id="PRO_0000034066" description="Acyl-coenzyme A thioesterase 2, mitochondrial">
    <location>
        <begin position="43"/>
        <end position="453"/>
    </location>
</feature>
<feature type="active site" description="Charge relay system" evidence="1">
    <location>
        <position position="273"/>
    </location>
</feature>
<feature type="active site" description="Charge relay system" evidence="1">
    <location>
        <position position="365"/>
    </location>
</feature>
<feature type="active site" description="Charge relay system" evidence="1">
    <location>
        <position position="399"/>
    </location>
</feature>
<feature type="modified residue" description="N6-acetyllysine" evidence="2">
    <location>
        <position position="83"/>
    </location>
</feature>
<feature type="modified residue" description="N6-succinyllysine" evidence="2">
    <location>
        <position position="447"/>
    </location>
</feature>
<feature type="sequence conflict" description="In Ref. 2; BAA32539." evidence="6" ref="2">
    <original>GS</original>
    <variation>AG</variation>
    <location>
        <begin position="51"/>
        <end position="52"/>
    </location>
</feature>
<feature type="sequence conflict" description="In Ref. 2; BAA32539." evidence="6" ref="2">
    <original>HAR</original>
    <variation>RAL</variation>
    <location>
        <begin position="90"/>
        <end position="92"/>
    </location>
</feature>
<feature type="sequence conflict" description="In Ref. 2; BAA32539." evidence="6" ref="2">
    <original>W</original>
    <variation>R</variation>
    <location>
        <position position="123"/>
    </location>
</feature>
<sequence length="453" mass="49701">MVASSFAVLRASRLCQWGWKSWTQLSGPPPLSTGGRTTFARTNATLSLEPGSRSCWDEPLSITVRGLAPEQPVTLRAALRDEKGALFRAHARYRADAGGELDLARAPALGGSFTGLEPMGLIWAMEPERPLWRLVKRDVQKPYVVELEVLDGHEPDGGQRLAQAVHERHFMAPGVRRVPVRDGRVRATLFLPPEPGPFPEIIDLFGVGGGLLEYRASLLAGKGFAVMALAYYNYDDLPKTMETMRIEYFEEAVNYLRGHPEVKGPGIGLLGISKGGELGLAMASFLKGITAAVVINGSVAAVGNTVCYKDETIPPVSLLRDKVKMTKDGLLDVVEALQSPLVDKKSFIPVERSDTTFLFLVGQDDHNWKSEFYAREASKRLQAHGKEKPQIICYPEAGHYIEPPYFPLCSAGMHLLVGANITFGGEPKPHSVAQLDAWQQLQTFFHKQLSGKS</sequence>
<name>ACOT2_RAT</name>
<dbReference type="EC" id="3.1.2.2" evidence="4"/>
<dbReference type="EMBL" id="Y09333">
    <property type="protein sequence ID" value="CAA70513.1"/>
    <property type="molecule type" value="mRNA"/>
</dbReference>
<dbReference type="EMBL" id="AB010429">
    <property type="protein sequence ID" value="BAA32539.1"/>
    <property type="molecule type" value="mRNA"/>
</dbReference>
<dbReference type="SMR" id="O55171"/>
<dbReference type="FunCoup" id="O55171">
    <property type="interactions" value="60"/>
</dbReference>
<dbReference type="STRING" id="10116.ENSRNOP00000013515"/>
<dbReference type="ESTHER" id="ratno-acot2">
    <property type="family name" value="Acyl-CoA_Thioesterase"/>
</dbReference>
<dbReference type="GlyGen" id="O55171">
    <property type="glycosylation" value="1 site, 1 O-linked glycan (1 site)"/>
</dbReference>
<dbReference type="iPTMnet" id="O55171"/>
<dbReference type="PhosphoSitePlus" id="O55171"/>
<dbReference type="SwissPalm" id="O55171"/>
<dbReference type="jPOST" id="O55171"/>
<dbReference type="PaxDb" id="10116-ENSRNOP00000013515"/>
<dbReference type="UCSC" id="RGD:621055">
    <property type="organism name" value="rat"/>
</dbReference>
<dbReference type="AGR" id="RGD:621055"/>
<dbReference type="RGD" id="621055">
    <property type="gene designation" value="Acot2"/>
</dbReference>
<dbReference type="eggNOG" id="ENOG502QQ8Z">
    <property type="taxonomic scope" value="Eukaryota"/>
</dbReference>
<dbReference type="InParanoid" id="O55171"/>
<dbReference type="OrthoDB" id="6347013at2759"/>
<dbReference type="PhylomeDB" id="O55171"/>
<dbReference type="BRENDA" id="3.1.2.2">
    <property type="organism ID" value="5301"/>
</dbReference>
<dbReference type="BRENDA" id="3.1.2.20">
    <property type="organism ID" value="5301"/>
</dbReference>
<dbReference type="Reactome" id="R-RNO-77289">
    <property type="pathway name" value="Mitochondrial Fatty Acid Beta-Oxidation"/>
</dbReference>
<dbReference type="Reactome" id="R-RNO-9033241">
    <property type="pathway name" value="Peroxisomal protein import"/>
</dbReference>
<dbReference type="Reactome" id="R-RNO-9837999">
    <property type="pathway name" value="Mitochondrial protein degradation"/>
</dbReference>
<dbReference type="UniPathway" id="UPA00199"/>
<dbReference type="PRO" id="PR:O55171"/>
<dbReference type="Proteomes" id="UP000002494">
    <property type="component" value="Unplaced"/>
</dbReference>
<dbReference type="GO" id="GO:0005759">
    <property type="term" value="C:mitochondrial matrix"/>
    <property type="evidence" value="ECO:0007669"/>
    <property type="project" value="UniProtKB-SubCell"/>
</dbReference>
<dbReference type="GO" id="GO:0005739">
    <property type="term" value="C:mitochondrion"/>
    <property type="evidence" value="ECO:0000266"/>
    <property type="project" value="RGD"/>
</dbReference>
<dbReference type="GO" id="GO:0052689">
    <property type="term" value="F:carboxylic ester hydrolase activity"/>
    <property type="evidence" value="ECO:0007669"/>
    <property type="project" value="UniProtKB-KW"/>
</dbReference>
<dbReference type="GO" id="GO:0047617">
    <property type="term" value="F:fatty acyl-CoA hydrolase activity"/>
    <property type="evidence" value="ECO:0000314"/>
    <property type="project" value="RGD"/>
</dbReference>
<dbReference type="GO" id="GO:0052816">
    <property type="term" value="F:long-chain fatty acyl-CoA hydrolase activity"/>
    <property type="evidence" value="ECO:0000314"/>
    <property type="project" value="RGD"/>
</dbReference>
<dbReference type="GO" id="GO:0006637">
    <property type="term" value="P:acyl-CoA metabolic process"/>
    <property type="evidence" value="ECO:0000266"/>
    <property type="project" value="RGD"/>
</dbReference>
<dbReference type="GO" id="GO:0006631">
    <property type="term" value="P:fatty acid metabolic process"/>
    <property type="evidence" value="ECO:0000318"/>
    <property type="project" value="GO_Central"/>
</dbReference>
<dbReference type="GO" id="GO:0001676">
    <property type="term" value="P:long-chain fatty acid metabolic process"/>
    <property type="evidence" value="ECO:0000266"/>
    <property type="project" value="RGD"/>
</dbReference>
<dbReference type="GO" id="GO:0036116">
    <property type="term" value="P:long-chain fatty-acyl-CoA catabolic process"/>
    <property type="evidence" value="ECO:0000314"/>
    <property type="project" value="RGD"/>
</dbReference>
<dbReference type="GO" id="GO:0070849">
    <property type="term" value="P:response to epidermal growth factor"/>
    <property type="evidence" value="ECO:0000270"/>
    <property type="project" value="RGD"/>
</dbReference>
<dbReference type="GO" id="GO:0009725">
    <property type="term" value="P:response to hormone"/>
    <property type="evidence" value="ECO:0000270"/>
    <property type="project" value="RGD"/>
</dbReference>
<dbReference type="GO" id="GO:0001666">
    <property type="term" value="P:response to hypoxia"/>
    <property type="evidence" value="ECO:0000314"/>
    <property type="project" value="HGNC-UCL"/>
</dbReference>
<dbReference type="GO" id="GO:0031667">
    <property type="term" value="P:response to nutrient levels"/>
    <property type="evidence" value="ECO:0000270"/>
    <property type="project" value="RGD"/>
</dbReference>
<dbReference type="GO" id="GO:0009410">
    <property type="term" value="P:response to xenobiotic stimulus"/>
    <property type="evidence" value="ECO:0000270"/>
    <property type="project" value="RGD"/>
</dbReference>
<dbReference type="GO" id="GO:0000038">
    <property type="term" value="P:very long-chain fatty acid metabolic process"/>
    <property type="evidence" value="ECO:0000266"/>
    <property type="project" value="RGD"/>
</dbReference>
<dbReference type="FunFam" id="2.60.40.2240:FF:000001">
    <property type="entry name" value="acyl-coenzyme A thioesterase 4"/>
    <property type="match status" value="1"/>
</dbReference>
<dbReference type="FunFam" id="3.40.50.1820:FF:000024">
    <property type="entry name" value="acyl-coenzyme A thioesterase 4"/>
    <property type="match status" value="1"/>
</dbReference>
<dbReference type="Gene3D" id="2.60.40.2240">
    <property type="entry name" value="Acyl-CoA thioester hydrolase/BAAT N-terminal domain"/>
    <property type="match status" value="1"/>
</dbReference>
<dbReference type="Gene3D" id="3.40.50.1820">
    <property type="entry name" value="alpha/beta hydrolase"/>
    <property type="match status" value="1"/>
</dbReference>
<dbReference type="InterPro" id="IPR029058">
    <property type="entry name" value="AB_hydrolase_fold"/>
</dbReference>
<dbReference type="InterPro" id="IPR016662">
    <property type="entry name" value="Acyl-CoA_thioEstase_long-chain"/>
</dbReference>
<dbReference type="InterPro" id="IPR014940">
    <property type="entry name" value="BAAT_C"/>
</dbReference>
<dbReference type="InterPro" id="IPR006862">
    <property type="entry name" value="Thio_Ohase/aa_AcTrfase"/>
</dbReference>
<dbReference type="InterPro" id="IPR042490">
    <property type="entry name" value="Thio_Ohase/BAAT_N"/>
</dbReference>
<dbReference type="PANTHER" id="PTHR10824:SF12">
    <property type="entry name" value="ACYL-COENZYME A THIOESTERASE 1-RELATED"/>
    <property type="match status" value="1"/>
</dbReference>
<dbReference type="PANTHER" id="PTHR10824">
    <property type="entry name" value="ACYL-COENZYME A THIOESTERASE-RELATED"/>
    <property type="match status" value="1"/>
</dbReference>
<dbReference type="Pfam" id="PF08840">
    <property type="entry name" value="BAAT_C"/>
    <property type="match status" value="1"/>
</dbReference>
<dbReference type="Pfam" id="PF04775">
    <property type="entry name" value="Bile_Hydr_Trans"/>
    <property type="match status" value="1"/>
</dbReference>
<dbReference type="PIRSF" id="PIRSF016521">
    <property type="entry name" value="Acyl-CoA_hydro"/>
    <property type="match status" value="1"/>
</dbReference>
<dbReference type="SUPFAM" id="SSF53474">
    <property type="entry name" value="alpha/beta-Hydrolases"/>
    <property type="match status" value="1"/>
</dbReference>
<gene>
    <name type="primary">Acot2</name>
    <name type="synonym">Mte1</name>
</gene>
<reference key="1">
    <citation type="journal article" date="1998" name="Biochem. J.">
        <title>Molecular cloning and characterization of a mitochondrial peroxisome proliferator-induced acyl-CoA thioesterase from rat liver.</title>
        <authorList>
            <person name="Svensson L.T."/>
            <person name="Engberg S.T."/>
            <person name="Aoyama T."/>
            <person name="Usuda N."/>
            <person name="Alexson S.E.H."/>
            <person name="Hashimoto T."/>
        </authorList>
    </citation>
    <scope>NUCLEOTIDE SEQUENCE [MRNA]</scope>
    <scope>PROTEIN SEQUENCE OF 147-166 AND 168-178</scope>
    <source>
        <strain>Sprague-Dawley</strain>
    </source>
</reference>
<reference key="2">
    <citation type="journal article" date="1998" name="Biochem. Biophys. Res. Commun.">
        <title>cDNA cloning and genomic organization of peroxisome proliferator-inducible long-chain acyl-CoA hydrolase from rat liver cytosol.</title>
        <authorList>
            <person name="Yamada J."/>
            <person name="Suga K."/>
            <person name="Furihata T."/>
            <person name="Kitahara M."/>
            <person name="Watanabe T."/>
            <person name="Hosokawa M."/>
            <person name="Satoh T."/>
            <person name="Suga T."/>
        </authorList>
    </citation>
    <scope>NUCLEOTIDE SEQUENCE [MRNA] OF 1-197</scope>
    <source>
        <tissue>Liver</tissue>
    </source>
</reference>
<reference key="3">
    <citation type="journal article" date="1995" name="J. Biol. Chem.">
        <title>Very long chain and long chain acyl-CoA thioesterases in rat liver mitochondria. Identification, purification, characterization, and induction by peroxisome proliferators.</title>
        <authorList>
            <person name="Svensson L.T."/>
            <person name="Alexson S.E."/>
            <person name="Hiltunen J.K."/>
        </authorList>
    </citation>
    <scope>FUNCTION</scope>
    <scope>CATALYTIC ACTIVITY</scope>
    <scope>PATHWAY</scope>
    <scope>INDUCTION BY DI(2-ETHYLHEXYL)PHTALATE</scope>
    <scope>SUBCELLULAR LOCATION</scope>
    <scope>SUBUNIT</scope>
    <scope>BIOPHYSICOCHEMICAL PROPERTIES</scope>
    <scope>TISSUE SPECIFICITY</scope>
    <source>
        <strain>Sprague-Dawley</strain>
        <tissue>Liver</tissue>
    </source>
</reference>
<protein>
    <recommendedName>
        <fullName>Acyl-coenzyme A thioesterase 2, mitochondrial</fullName>
        <shortName>Acyl-CoA thioesterase 2</shortName>
        <ecNumber evidence="4">3.1.2.2</ecNumber>
    </recommendedName>
    <alternativeName>
        <fullName>ARTISt/p43</fullName>
    </alternativeName>
    <alternativeName>
        <fullName>Acyl coenzyme A thioester hydrolase</fullName>
    </alternativeName>
    <alternativeName>
        <fullName evidence="5">MTE-I</fullName>
    </alternativeName>
    <alternativeName>
        <fullName evidence="5">Very-long-chain acyl-CoA thioesterase</fullName>
    </alternativeName>
</protein>
<comment type="function">
    <text evidence="2 4">Catalyzes the hydrolysis of acyl-CoAs into free fatty acids and coenzyme A (CoASH), regulating their respective intracellular levels (By similarity). Displays higher activity toward long chain acyl CoAs (C14-C20) (PubMed:7744868). The enzyme is involved in enhancing the hepatic fatty acid oxidation in mitochondria (By similarity).</text>
</comment>
<comment type="catalytic activity">
    <reaction evidence="4">
        <text>hexadecanoyl-CoA + H2O = hexadecanoate + CoA + H(+)</text>
        <dbReference type="Rhea" id="RHEA:16645"/>
        <dbReference type="ChEBI" id="CHEBI:7896"/>
        <dbReference type="ChEBI" id="CHEBI:15377"/>
        <dbReference type="ChEBI" id="CHEBI:15378"/>
        <dbReference type="ChEBI" id="CHEBI:57287"/>
        <dbReference type="ChEBI" id="CHEBI:57379"/>
        <dbReference type="EC" id="3.1.2.2"/>
    </reaction>
    <physiologicalReaction direction="left-to-right" evidence="7">
        <dbReference type="Rhea" id="RHEA:16646"/>
    </physiologicalReaction>
</comment>
<comment type="catalytic activity">
    <reaction evidence="4">
        <text>tetradecanoyl-CoA + H2O = tetradecanoate + CoA + H(+)</text>
        <dbReference type="Rhea" id="RHEA:40119"/>
        <dbReference type="ChEBI" id="CHEBI:15377"/>
        <dbReference type="ChEBI" id="CHEBI:15378"/>
        <dbReference type="ChEBI" id="CHEBI:30807"/>
        <dbReference type="ChEBI" id="CHEBI:57287"/>
        <dbReference type="ChEBI" id="CHEBI:57385"/>
    </reaction>
    <physiologicalReaction direction="left-to-right" evidence="7">
        <dbReference type="Rhea" id="RHEA:40120"/>
    </physiologicalReaction>
</comment>
<comment type="catalytic activity">
    <reaction evidence="4">
        <text>octadecanoyl-CoA + H2O = octadecanoate + CoA + H(+)</text>
        <dbReference type="Rhea" id="RHEA:30139"/>
        <dbReference type="ChEBI" id="CHEBI:15377"/>
        <dbReference type="ChEBI" id="CHEBI:15378"/>
        <dbReference type="ChEBI" id="CHEBI:25629"/>
        <dbReference type="ChEBI" id="CHEBI:57287"/>
        <dbReference type="ChEBI" id="CHEBI:57394"/>
    </reaction>
    <physiologicalReaction direction="left-to-right" evidence="7">
        <dbReference type="Rhea" id="RHEA:30140"/>
    </physiologicalReaction>
</comment>
<comment type="catalytic activity">
    <reaction evidence="4">
        <text>eicosanoyl-CoA + H2O = eicosanoate + CoA + H(+)</text>
        <dbReference type="Rhea" id="RHEA:40147"/>
        <dbReference type="ChEBI" id="CHEBI:15377"/>
        <dbReference type="ChEBI" id="CHEBI:15378"/>
        <dbReference type="ChEBI" id="CHEBI:32360"/>
        <dbReference type="ChEBI" id="CHEBI:57287"/>
        <dbReference type="ChEBI" id="CHEBI:57380"/>
    </reaction>
    <physiologicalReaction direction="left-to-right" evidence="7">
        <dbReference type="Rhea" id="RHEA:40148"/>
    </physiologicalReaction>
</comment>
<comment type="catalytic activity">
    <reaction evidence="4">
        <text>decanoyl-CoA + H2O = decanoate + CoA + H(+)</text>
        <dbReference type="Rhea" id="RHEA:40059"/>
        <dbReference type="ChEBI" id="CHEBI:15377"/>
        <dbReference type="ChEBI" id="CHEBI:15378"/>
        <dbReference type="ChEBI" id="CHEBI:27689"/>
        <dbReference type="ChEBI" id="CHEBI:57287"/>
        <dbReference type="ChEBI" id="CHEBI:61430"/>
    </reaction>
    <physiologicalReaction direction="left-to-right" evidence="7">
        <dbReference type="Rhea" id="RHEA:40060"/>
    </physiologicalReaction>
</comment>
<comment type="catalytic activity">
    <reaction evidence="4">
        <text>dodecanoyl-CoA + H2O = dodecanoate + CoA + H(+)</text>
        <dbReference type="Rhea" id="RHEA:30135"/>
        <dbReference type="ChEBI" id="CHEBI:15377"/>
        <dbReference type="ChEBI" id="CHEBI:15378"/>
        <dbReference type="ChEBI" id="CHEBI:18262"/>
        <dbReference type="ChEBI" id="CHEBI:57287"/>
        <dbReference type="ChEBI" id="CHEBI:57375"/>
    </reaction>
    <physiologicalReaction direction="left-to-right" evidence="7">
        <dbReference type="Rhea" id="RHEA:30136"/>
    </physiologicalReaction>
</comment>
<comment type="catalytic activity">
    <reaction evidence="1">
        <text>(9Z)-octadecenoyl-CoA + H2O = (9Z)-octadecenoate + CoA + H(+)</text>
        <dbReference type="Rhea" id="RHEA:40139"/>
        <dbReference type="ChEBI" id="CHEBI:15377"/>
        <dbReference type="ChEBI" id="CHEBI:15378"/>
        <dbReference type="ChEBI" id="CHEBI:30823"/>
        <dbReference type="ChEBI" id="CHEBI:57287"/>
        <dbReference type="ChEBI" id="CHEBI:57387"/>
    </reaction>
    <physiologicalReaction direction="left-to-right" evidence="1">
        <dbReference type="Rhea" id="RHEA:40140"/>
    </physiologicalReaction>
</comment>
<comment type="catalytic activity">
    <reaction evidence="1">
        <text>(9Z)-hexadecenoyl-CoA + H2O = (9Z)-hexadecenoate + CoA + H(+)</text>
        <dbReference type="Rhea" id="RHEA:40131"/>
        <dbReference type="ChEBI" id="CHEBI:15377"/>
        <dbReference type="ChEBI" id="CHEBI:15378"/>
        <dbReference type="ChEBI" id="CHEBI:32372"/>
        <dbReference type="ChEBI" id="CHEBI:57287"/>
        <dbReference type="ChEBI" id="CHEBI:61540"/>
    </reaction>
    <physiologicalReaction direction="left-to-right" evidence="1">
        <dbReference type="Rhea" id="RHEA:40132"/>
    </physiologicalReaction>
</comment>
<comment type="catalytic activity">
    <reaction evidence="1">
        <text>(9E)-octadecenoyl-CoA + H2O = (9E)-octadecenoate + CoA + H(+)</text>
        <dbReference type="Rhea" id="RHEA:40723"/>
        <dbReference type="ChEBI" id="CHEBI:15377"/>
        <dbReference type="ChEBI" id="CHEBI:15378"/>
        <dbReference type="ChEBI" id="CHEBI:30825"/>
        <dbReference type="ChEBI" id="CHEBI:57287"/>
        <dbReference type="ChEBI" id="CHEBI:77537"/>
    </reaction>
    <physiologicalReaction direction="left-to-right" evidence="1">
        <dbReference type="Rhea" id="RHEA:40724"/>
    </physiologicalReaction>
</comment>
<comment type="catalytic activity">
    <reaction evidence="2">
        <text>(9Z,12Z)-octadecadienoyl-CoA + H2O = (9Z,12Z)-octadecadienoate + CoA + H(+)</text>
        <dbReference type="Rhea" id="RHEA:40143"/>
        <dbReference type="ChEBI" id="CHEBI:15377"/>
        <dbReference type="ChEBI" id="CHEBI:15378"/>
        <dbReference type="ChEBI" id="CHEBI:30245"/>
        <dbReference type="ChEBI" id="CHEBI:57287"/>
        <dbReference type="ChEBI" id="CHEBI:57383"/>
    </reaction>
    <physiologicalReaction direction="left-to-right" evidence="2">
        <dbReference type="Rhea" id="RHEA:40144"/>
    </physiologicalReaction>
</comment>
<comment type="biophysicochemical properties">
    <kinetics>
        <KM evidence="4">16 uM for C10-acyl-CoA</KM>
        <KM evidence="4">5 uM for C12-acyl-CoA</KM>
        <KM evidence="4">3 uM for C14-acyl-CoA</KM>
        <KM evidence="4">6 uM for C16-acyl-CoA</KM>
        <KM evidence="4">3 uM for C18-acyl-CoA</KM>
        <KM evidence="4">2 uM for C20-acyl-CoA</KM>
        <Vmax evidence="4">1.0 umol/min/mg enzyme with C10-acyl-CoA as substrate</Vmax>
        <Vmax evidence="4">2.2 umol/min/mg enzyme with C12-acyl-CoA as substrate</Vmax>
        <Vmax evidence="4">4.2 umol/min/mg enzyme with C14-acyl-CoA as substrate</Vmax>
        <Vmax evidence="4">4.5 umol/min/mg enzyme with C16-acyl-CoA as substrate</Vmax>
        <Vmax evidence="4">3.3 umol/min/mg enzyme with C18-acyl-CoA as substrate</Vmax>
        <Vmax evidence="4">3.1 umol/min/mg enzyme with C20-acyl-CoA as substrate</Vmax>
    </kinetics>
    <phDependence>
        <text evidence="4">Optimum pH is 8-9.</text>
    </phDependence>
</comment>
<comment type="pathway">
    <text evidence="7">Lipid metabolism; fatty acid metabolism.</text>
</comment>
<comment type="subunit">
    <text evidence="4">Monomer.</text>
</comment>
<comment type="subcellular location">
    <subcellularLocation>
        <location evidence="4">Mitochondrion matrix</location>
    </subcellularLocation>
</comment>
<comment type="tissue specificity">
    <text evidence="4">Constitutively expressed in heart and brown fat. Strongly induced in liver, and weakly in kidney, in peroxisome proliferator treated rat.</text>
</comment>
<comment type="induction">
    <text evidence="4">Regulated by peroxisome proliferator, via the peroxisome proliferator-activated receptors (PPARs).</text>
</comment>
<comment type="PTM">
    <text>The N-terminus is blocked.</text>
</comment>
<comment type="similarity">
    <text evidence="6">Belongs to the C/M/P thioester hydrolase family.</text>
</comment>
<organism>
    <name type="scientific">Rattus norvegicus</name>
    <name type="common">Rat</name>
    <dbReference type="NCBI Taxonomy" id="10116"/>
    <lineage>
        <taxon>Eukaryota</taxon>
        <taxon>Metazoa</taxon>
        <taxon>Chordata</taxon>
        <taxon>Craniata</taxon>
        <taxon>Vertebrata</taxon>
        <taxon>Euteleostomi</taxon>
        <taxon>Mammalia</taxon>
        <taxon>Eutheria</taxon>
        <taxon>Euarchontoglires</taxon>
        <taxon>Glires</taxon>
        <taxon>Rodentia</taxon>
        <taxon>Myomorpha</taxon>
        <taxon>Muroidea</taxon>
        <taxon>Muridae</taxon>
        <taxon>Murinae</taxon>
        <taxon>Rattus</taxon>
    </lineage>
</organism>
<accession>O55171</accession>
<accession>O88268</accession>
<proteinExistence type="evidence at protein level"/>
<evidence type="ECO:0000250" key="1">
    <source>
        <dbReference type="UniProtKB" id="P49753"/>
    </source>
</evidence>
<evidence type="ECO:0000250" key="2">
    <source>
        <dbReference type="UniProtKB" id="Q9QYR9"/>
    </source>
</evidence>
<evidence type="ECO:0000255" key="3"/>
<evidence type="ECO:0000269" key="4">
    <source>
    </source>
</evidence>
<evidence type="ECO:0000303" key="5">
    <source>
    </source>
</evidence>
<evidence type="ECO:0000305" key="6"/>
<evidence type="ECO:0000305" key="7">
    <source>
    </source>
</evidence>